<organism>
    <name type="scientific">Acaryochloris marina (strain MBIC 11017)</name>
    <dbReference type="NCBI Taxonomy" id="329726"/>
    <lineage>
        <taxon>Bacteria</taxon>
        <taxon>Bacillati</taxon>
        <taxon>Cyanobacteriota</taxon>
        <taxon>Cyanophyceae</taxon>
        <taxon>Acaryochloridales</taxon>
        <taxon>Acaryochloridaceae</taxon>
        <taxon>Acaryochloris</taxon>
    </lineage>
</organism>
<proteinExistence type="inferred from homology"/>
<comment type="function">
    <text evidence="1">Catalyzes the acyloin condensation reaction between C atoms 2 and 3 of pyruvate and glyceraldehyde 3-phosphate to yield 1-deoxy-D-xylulose-5-phosphate (DXP).</text>
</comment>
<comment type="catalytic activity">
    <reaction evidence="1">
        <text>D-glyceraldehyde 3-phosphate + pyruvate + H(+) = 1-deoxy-D-xylulose 5-phosphate + CO2</text>
        <dbReference type="Rhea" id="RHEA:12605"/>
        <dbReference type="ChEBI" id="CHEBI:15361"/>
        <dbReference type="ChEBI" id="CHEBI:15378"/>
        <dbReference type="ChEBI" id="CHEBI:16526"/>
        <dbReference type="ChEBI" id="CHEBI:57792"/>
        <dbReference type="ChEBI" id="CHEBI:59776"/>
        <dbReference type="EC" id="2.2.1.7"/>
    </reaction>
</comment>
<comment type="cofactor">
    <cofactor evidence="1">
        <name>Mg(2+)</name>
        <dbReference type="ChEBI" id="CHEBI:18420"/>
    </cofactor>
    <text evidence="1">Binds 1 Mg(2+) ion per subunit.</text>
</comment>
<comment type="cofactor">
    <cofactor evidence="1">
        <name>thiamine diphosphate</name>
        <dbReference type="ChEBI" id="CHEBI:58937"/>
    </cofactor>
    <text evidence="1">Binds 1 thiamine pyrophosphate per subunit.</text>
</comment>
<comment type="pathway">
    <text evidence="1">Metabolic intermediate biosynthesis; 1-deoxy-D-xylulose 5-phosphate biosynthesis; 1-deoxy-D-xylulose 5-phosphate from D-glyceraldehyde 3-phosphate and pyruvate: step 1/1.</text>
</comment>
<comment type="subunit">
    <text evidence="1">Homodimer.</text>
</comment>
<comment type="similarity">
    <text evidence="1">Belongs to the transketolase family. DXPS subfamily.</text>
</comment>
<keyword id="KW-0414">Isoprene biosynthesis</keyword>
<keyword id="KW-0460">Magnesium</keyword>
<keyword id="KW-0479">Metal-binding</keyword>
<keyword id="KW-1185">Reference proteome</keyword>
<keyword id="KW-0784">Thiamine biosynthesis</keyword>
<keyword id="KW-0786">Thiamine pyrophosphate</keyword>
<keyword id="KW-0808">Transferase</keyword>
<protein>
    <recommendedName>
        <fullName evidence="1">1-deoxy-D-xylulose-5-phosphate synthase</fullName>
        <ecNumber evidence="1">2.2.1.7</ecNumber>
    </recommendedName>
    <alternativeName>
        <fullName evidence="1">1-deoxyxylulose-5-phosphate synthase</fullName>
        <shortName evidence="1">DXP synthase</shortName>
        <shortName evidence="1">DXPS</shortName>
    </alternativeName>
</protein>
<name>DXS_ACAM1</name>
<accession>B0C8J3</accession>
<evidence type="ECO:0000255" key="1">
    <source>
        <dbReference type="HAMAP-Rule" id="MF_00315"/>
    </source>
</evidence>
<dbReference type="EC" id="2.2.1.7" evidence="1"/>
<dbReference type="EMBL" id="CP000828">
    <property type="protein sequence ID" value="ABW30148.1"/>
    <property type="molecule type" value="Genomic_DNA"/>
</dbReference>
<dbReference type="RefSeq" id="WP_012165409.1">
    <property type="nucleotide sequence ID" value="NC_009925.1"/>
</dbReference>
<dbReference type="SMR" id="B0C8J3"/>
<dbReference type="STRING" id="329726.AM1_5186"/>
<dbReference type="KEGG" id="amr:AM1_5186"/>
<dbReference type="eggNOG" id="COG1154">
    <property type="taxonomic scope" value="Bacteria"/>
</dbReference>
<dbReference type="HOGENOM" id="CLU_009227_1_4_3"/>
<dbReference type="OrthoDB" id="9803371at2"/>
<dbReference type="UniPathway" id="UPA00064">
    <property type="reaction ID" value="UER00091"/>
</dbReference>
<dbReference type="Proteomes" id="UP000000268">
    <property type="component" value="Chromosome"/>
</dbReference>
<dbReference type="GO" id="GO:0005829">
    <property type="term" value="C:cytosol"/>
    <property type="evidence" value="ECO:0007669"/>
    <property type="project" value="TreeGrafter"/>
</dbReference>
<dbReference type="GO" id="GO:0008661">
    <property type="term" value="F:1-deoxy-D-xylulose-5-phosphate synthase activity"/>
    <property type="evidence" value="ECO:0007669"/>
    <property type="project" value="UniProtKB-UniRule"/>
</dbReference>
<dbReference type="GO" id="GO:0000287">
    <property type="term" value="F:magnesium ion binding"/>
    <property type="evidence" value="ECO:0007669"/>
    <property type="project" value="UniProtKB-UniRule"/>
</dbReference>
<dbReference type="GO" id="GO:0030976">
    <property type="term" value="F:thiamine pyrophosphate binding"/>
    <property type="evidence" value="ECO:0007669"/>
    <property type="project" value="UniProtKB-UniRule"/>
</dbReference>
<dbReference type="GO" id="GO:0052865">
    <property type="term" value="P:1-deoxy-D-xylulose 5-phosphate biosynthetic process"/>
    <property type="evidence" value="ECO:0007669"/>
    <property type="project" value="UniProtKB-UniPathway"/>
</dbReference>
<dbReference type="GO" id="GO:0019288">
    <property type="term" value="P:isopentenyl diphosphate biosynthetic process, methylerythritol 4-phosphate pathway"/>
    <property type="evidence" value="ECO:0007669"/>
    <property type="project" value="TreeGrafter"/>
</dbReference>
<dbReference type="GO" id="GO:0016114">
    <property type="term" value="P:terpenoid biosynthetic process"/>
    <property type="evidence" value="ECO:0007669"/>
    <property type="project" value="UniProtKB-UniRule"/>
</dbReference>
<dbReference type="GO" id="GO:0009228">
    <property type="term" value="P:thiamine biosynthetic process"/>
    <property type="evidence" value="ECO:0007669"/>
    <property type="project" value="UniProtKB-UniRule"/>
</dbReference>
<dbReference type="CDD" id="cd02007">
    <property type="entry name" value="TPP_DXS"/>
    <property type="match status" value="1"/>
</dbReference>
<dbReference type="CDD" id="cd07033">
    <property type="entry name" value="TPP_PYR_DXS_TK_like"/>
    <property type="match status" value="1"/>
</dbReference>
<dbReference type="FunFam" id="3.40.50.920:FF:000002">
    <property type="entry name" value="1-deoxy-D-xylulose-5-phosphate synthase"/>
    <property type="match status" value="1"/>
</dbReference>
<dbReference type="FunFam" id="3.40.50.970:FF:000005">
    <property type="entry name" value="1-deoxy-D-xylulose-5-phosphate synthase"/>
    <property type="match status" value="1"/>
</dbReference>
<dbReference type="Gene3D" id="3.40.50.920">
    <property type="match status" value="1"/>
</dbReference>
<dbReference type="Gene3D" id="3.40.50.970">
    <property type="match status" value="2"/>
</dbReference>
<dbReference type="HAMAP" id="MF_00315">
    <property type="entry name" value="DXP_synth"/>
    <property type="match status" value="1"/>
</dbReference>
<dbReference type="InterPro" id="IPR005477">
    <property type="entry name" value="Dxylulose-5-P_synthase"/>
</dbReference>
<dbReference type="InterPro" id="IPR029061">
    <property type="entry name" value="THDP-binding"/>
</dbReference>
<dbReference type="InterPro" id="IPR009014">
    <property type="entry name" value="Transketo_C/PFOR_II"/>
</dbReference>
<dbReference type="InterPro" id="IPR005475">
    <property type="entry name" value="Transketolase-like_Pyr-bd"/>
</dbReference>
<dbReference type="InterPro" id="IPR020826">
    <property type="entry name" value="Transketolase_BS"/>
</dbReference>
<dbReference type="InterPro" id="IPR033248">
    <property type="entry name" value="Transketolase_C"/>
</dbReference>
<dbReference type="InterPro" id="IPR049557">
    <property type="entry name" value="Transketolase_CS"/>
</dbReference>
<dbReference type="NCBIfam" id="TIGR00204">
    <property type="entry name" value="dxs"/>
    <property type="match status" value="1"/>
</dbReference>
<dbReference type="NCBIfam" id="NF003933">
    <property type="entry name" value="PRK05444.2-2"/>
    <property type="match status" value="1"/>
</dbReference>
<dbReference type="PANTHER" id="PTHR43322">
    <property type="entry name" value="1-D-DEOXYXYLULOSE 5-PHOSPHATE SYNTHASE-RELATED"/>
    <property type="match status" value="1"/>
</dbReference>
<dbReference type="PANTHER" id="PTHR43322:SF5">
    <property type="entry name" value="1-DEOXY-D-XYLULOSE-5-PHOSPHATE SYNTHASE, CHLOROPLASTIC"/>
    <property type="match status" value="1"/>
</dbReference>
<dbReference type="Pfam" id="PF13292">
    <property type="entry name" value="DXP_synthase_N"/>
    <property type="match status" value="1"/>
</dbReference>
<dbReference type="Pfam" id="PF02779">
    <property type="entry name" value="Transket_pyr"/>
    <property type="match status" value="1"/>
</dbReference>
<dbReference type="Pfam" id="PF02780">
    <property type="entry name" value="Transketolase_C"/>
    <property type="match status" value="1"/>
</dbReference>
<dbReference type="SMART" id="SM00861">
    <property type="entry name" value="Transket_pyr"/>
    <property type="match status" value="1"/>
</dbReference>
<dbReference type="SUPFAM" id="SSF52518">
    <property type="entry name" value="Thiamin diphosphate-binding fold (THDP-binding)"/>
    <property type="match status" value="2"/>
</dbReference>
<dbReference type="SUPFAM" id="SSF52922">
    <property type="entry name" value="TK C-terminal domain-like"/>
    <property type="match status" value="1"/>
</dbReference>
<dbReference type="PROSITE" id="PS00801">
    <property type="entry name" value="TRANSKETOLASE_1"/>
    <property type="match status" value="1"/>
</dbReference>
<dbReference type="PROSITE" id="PS00802">
    <property type="entry name" value="TRANSKETOLASE_2"/>
    <property type="match status" value="1"/>
</dbReference>
<feature type="chain" id="PRO_1000079080" description="1-deoxy-D-xylulose-5-phosphate synthase">
    <location>
        <begin position="1"/>
        <end position="635"/>
    </location>
</feature>
<feature type="binding site" evidence="1">
    <location>
        <position position="72"/>
    </location>
    <ligand>
        <name>thiamine diphosphate</name>
        <dbReference type="ChEBI" id="CHEBI:58937"/>
    </ligand>
</feature>
<feature type="binding site" evidence="1">
    <location>
        <begin position="113"/>
        <end position="115"/>
    </location>
    <ligand>
        <name>thiamine diphosphate</name>
        <dbReference type="ChEBI" id="CHEBI:58937"/>
    </ligand>
</feature>
<feature type="binding site" evidence="1">
    <location>
        <position position="144"/>
    </location>
    <ligand>
        <name>Mg(2+)</name>
        <dbReference type="ChEBI" id="CHEBI:18420"/>
    </ligand>
</feature>
<feature type="binding site" evidence="1">
    <location>
        <begin position="145"/>
        <end position="146"/>
    </location>
    <ligand>
        <name>thiamine diphosphate</name>
        <dbReference type="ChEBI" id="CHEBI:58937"/>
    </ligand>
</feature>
<feature type="binding site" evidence="1">
    <location>
        <position position="174"/>
    </location>
    <ligand>
        <name>Mg(2+)</name>
        <dbReference type="ChEBI" id="CHEBI:18420"/>
    </ligand>
</feature>
<feature type="binding site" evidence="1">
    <location>
        <position position="174"/>
    </location>
    <ligand>
        <name>thiamine diphosphate</name>
        <dbReference type="ChEBI" id="CHEBI:58937"/>
    </ligand>
</feature>
<feature type="binding site" evidence="1">
    <location>
        <position position="286"/>
    </location>
    <ligand>
        <name>thiamine diphosphate</name>
        <dbReference type="ChEBI" id="CHEBI:58937"/>
    </ligand>
</feature>
<feature type="binding site" evidence="1">
    <location>
        <position position="369"/>
    </location>
    <ligand>
        <name>thiamine diphosphate</name>
        <dbReference type="ChEBI" id="CHEBI:58937"/>
    </ligand>
</feature>
<reference key="1">
    <citation type="journal article" date="2008" name="Proc. Natl. Acad. Sci. U.S.A.">
        <title>Niche adaptation and genome expansion in the chlorophyll d-producing cyanobacterium Acaryochloris marina.</title>
        <authorList>
            <person name="Swingley W.D."/>
            <person name="Chen M."/>
            <person name="Cheung P.C."/>
            <person name="Conrad A.L."/>
            <person name="Dejesa L.C."/>
            <person name="Hao J."/>
            <person name="Honchak B.M."/>
            <person name="Karbach L.E."/>
            <person name="Kurdoglu A."/>
            <person name="Lahiri S."/>
            <person name="Mastrian S.D."/>
            <person name="Miyashita H."/>
            <person name="Page L."/>
            <person name="Ramakrishna P."/>
            <person name="Satoh S."/>
            <person name="Sattley W.M."/>
            <person name="Shimada Y."/>
            <person name="Taylor H.L."/>
            <person name="Tomo T."/>
            <person name="Tsuchiya T."/>
            <person name="Wang Z.T."/>
            <person name="Raymond J."/>
            <person name="Mimuro M."/>
            <person name="Blankenship R.E."/>
            <person name="Touchman J.W."/>
        </authorList>
    </citation>
    <scope>NUCLEOTIDE SEQUENCE [LARGE SCALE GENOMIC DNA]</scope>
    <source>
        <strain>MBIC 11017</strain>
    </source>
</reference>
<sequence>MHLSEIVHPNQLHGLSISELKQIANQIREKHLDTVATSGGHLGPGLGVVELTLALYQTLDLDQDKVVWDVGHQAYPHKLITGRYERFHTLRQKDGVAGYLNRRESKFDHFGAGHASTSISSVLGMALARDAKGENFKTVAVIGDGAMTGGMALEAINHAGHLPHTRMLVILNDNDMSISPNVGAMSRYLNKMRLSPPIQFLSDNFEEQLKQLPFGEQVAPDLKRLKGGMKRLAVSKVGAVFEELGFTYIGPVDGHSLEELLATFKEAHLHEGPVLVHVATTKGKGYAIAEQDQVSYHAQSPFNLETGKAKPSNKPKPPSYSKVFAETLIKMAENDIRVVGITAAMATGTGLDKLQAKLPKQYIDVGIAEQHAVTLAAGMACEGMRPVVAIYSTFLQRGYDQIIHDVCIQNLPVFFCLDRAGIVGADGPTHQGMYDIAYLRCLPNMVMMAPKDEAELQQMLVTGINYTDGPIAMRYPRGSGLGVGLMEEGWEPLPIGKAETLRHGDDVLLLAYGTMVNLASQVADMLTEHGVRATVVNARFAKPLDTELIIPLAQKIGQVVTLEEGCLPGGFGSAVLEALMDHQVMAPVTRIGVPDQLVEHATPDQSKAELGLTPAQVAERVLGLLKQKPAPSYVS</sequence>
<gene>
    <name evidence="1" type="primary">dxs</name>
    <name type="ordered locus">AM1_5186</name>
</gene>